<protein>
    <recommendedName>
        <fullName evidence="1">Serine--tRNA ligase</fullName>
        <ecNumber evidence="1">6.1.1.11</ecNumber>
    </recommendedName>
    <alternativeName>
        <fullName evidence="1">Seryl-tRNA synthetase</fullName>
        <shortName evidence="1">SerRS</shortName>
    </alternativeName>
    <alternativeName>
        <fullName evidence="1">Seryl-tRNA(Ser/Sec) synthetase</fullName>
    </alternativeName>
</protein>
<accession>Q7U518</accession>
<keyword id="KW-0030">Aminoacyl-tRNA synthetase</keyword>
<keyword id="KW-0067">ATP-binding</keyword>
<keyword id="KW-0963">Cytoplasm</keyword>
<keyword id="KW-0436">Ligase</keyword>
<keyword id="KW-0547">Nucleotide-binding</keyword>
<keyword id="KW-0648">Protein biosynthesis</keyword>
<sequence>MLDQRLVRENPDAIATELGRRGKAVDLTRLQVIAQQQRKLEEERSGLQAEGNRIGKEVGQKIKGGADPKGEEVAELRQQGNAIKQKVAVLEEEEKHLFTQLKEQLLTYPNLPSPDCPEGKDETDNVELRRWGSPRQEEGLEEHWQIAERLHLFDTERSVRIAQSRFVTLMGQGARLERALINFMLDLHTSKGYREVMPPVLVNSASLTGSGQLPKFADDCFRCSEDDLWLTPTAEVPVTSLHRDEIIPADQLPLRYAAYSPCFRREAGSYGRDTRGLIRLHQFNKVELYWFAHPDHSAEAHAQITADAEAVLQALELPYRVLDLCTADIGFSAQRTYDLEVWLPGAEAYREISSCSVCGDFQARRSAIRTKEGKSTKLVHTLNGSGLAVGRTMAAVLETGQQSDGSVLLPKALVPYVGDERLQPE</sequence>
<evidence type="ECO:0000255" key="1">
    <source>
        <dbReference type="HAMAP-Rule" id="MF_00176"/>
    </source>
</evidence>
<name>SYS_PARMW</name>
<dbReference type="EC" id="6.1.1.11" evidence="1"/>
<dbReference type="EMBL" id="BX569694">
    <property type="protein sequence ID" value="CAE08409.1"/>
    <property type="molecule type" value="Genomic_DNA"/>
</dbReference>
<dbReference type="RefSeq" id="WP_011128752.1">
    <property type="nucleotide sequence ID" value="NC_005070.1"/>
</dbReference>
<dbReference type="SMR" id="Q7U518"/>
<dbReference type="STRING" id="84588.SYNW1894"/>
<dbReference type="KEGG" id="syw:SYNW1894"/>
<dbReference type="eggNOG" id="COG0172">
    <property type="taxonomic scope" value="Bacteria"/>
</dbReference>
<dbReference type="HOGENOM" id="CLU_023797_1_1_3"/>
<dbReference type="UniPathway" id="UPA00906">
    <property type="reaction ID" value="UER00895"/>
</dbReference>
<dbReference type="Proteomes" id="UP000001422">
    <property type="component" value="Chromosome"/>
</dbReference>
<dbReference type="GO" id="GO:0005737">
    <property type="term" value="C:cytoplasm"/>
    <property type="evidence" value="ECO:0007669"/>
    <property type="project" value="UniProtKB-SubCell"/>
</dbReference>
<dbReference type="GO" id="GO:0005524">
    <property type="term" value="F:ATP binding"/>
    <property type="evidence" value="ECO:0007669"/>
    <property type="project" value="UniProtKB-UniRule"/>
</dbReference>
<dbReference type="GO" id="GO:0004828">
    <property type="term" value="F:serine-tRNA ligase activity"/>
    <property type="evidence" value="ECO:0007669"/>
    <property type="project" value="UniProtKB-UniRule"/>
</dbReference>
<dbReference type="GO" id="GO:0016260">
    <property type="term" value="P:selenocysteine biosynthetic process"/>
    <property type="evidence" value="ECO:0007669"/>
    <property type="project" value="UniProtKB-UniRule"/>
</dbReference>
<dbReference type="GO" id="GO:0006434">
    <property type="term" value="P:seryl-tRNA aminoacylation"/>
    <property type="evidence" value="ECO:0007669"/>
    <property type="project" value="UniProtKB-UniRule"/>
</dbReference>
<dbReference type="CDD" id="cd00770">
    <property type="entry name" value="SerRS_core"/>
    <property type="match status" value="1"/>
</dbReference>
<dbReference type="Gene3D" id="3.30.930.10">
    <property type="entry name" value="Bira Bifunctional Protein, Domain 2"/>
    <property type="match status" value="1"/>
</dbReference>
<dbReference type="Gene3D" id="1.10.287.40">
    <property type="entry name" value="Serine-tRNA synthetase, tRNA binding domain"/>
    <property type="match status" value="1"/>
</dbReference>
<dbReference type="HAMAP" id="MF_00176">
    <property type="entry name" value="Ser_tRNA_synth_type1"/>
    <property type="match status" value="1"/>
</dbReference>
<dbReference type="InterPro" id="IPR002314">
    <property type="entry name" value="aa-tRNA-synt_IIb"/>
</dbReference>
<dbReference type="InterPro" id="IPR006195">
    <property type="entry name" value="aa-tRNA-synth_II"/>
</dbReference>
<dbReference type="InterPro" id="IPR045864">
    <property type="entry name" value="aa-tRNA-synth_II/BPL/LPL"/>
</dbReference>
<dbReference type="InterPro" id="IPR002317">
    <property type="entry name" value="Ser-tRNA-ligase_type_1"/>
</dbReference>
<dbReference type="InterPro" id="IPR015866">
    <property type="entry name" value="Ser-tRNA-synth_1_N"/>
</dbReference>
<dbReference type="InterPro" id="IPR042103">
    <property type="entry name" value="SerRS_1_N_sf"/>
</dbReference>
<dbReference type="InterPro" id="IPR033729">
    <property type="entry name" value="SerRS_core"/>
</dbReference>
<dbReference type="InterPro" id="IPR010978">
    <property type="entry name" value="tRNA-bd_arm"/>
</dbReference>
<dbReference type="NCBIfam" id="TIGR00414">
    <property type="entry name" value="serS"/>
    <property type="match status" value="1"/>
</dbReference>
<dbReference type="PANTHER" id="PTHR43697:SF1">
    <property type="entry name" value="SERINE--TRNA LIGASE"/>
    <property type="match status" value="1"/>
</dbReference>
<dbReference type="PANTHER" id="PTHR43697">
    <property type="entry name" value="SERYL-TRNA SYNTHETASE"/>
    <property type="match status" value="1"/>
</dbReference>
<dbReference type="Pfam" id="PF02403">
    <property type="entry name" value="Seryl_tRNA_N"/>
    <property type="match status" value="1"/>
</dbReference>
<dbReference type="Pfam" id="PF00587">
    <property type="entry name" value="tRNA-synt_2b"/>
    <property type="match status" value="1"/>
</dbReference>
<dbReference type="PIRSF" id="PIRSF001529">
    <property type="entry name" value="Ser-tRNA-synth_IIa"/>
    <property type="match status" value="1"/>
</dbReference>
<dbReference type="PRINTS" id="PR00981">
    <property type="entry name" value="TRNASYNTHSER"/>
</dbReference>
<dbReference type="SUPFAM" id="SSF55681">
    <property type="entry name" value="Class II aaRS and biotin synthetases"/>
    <property type="match status" value="1"/>
</dbReference>
<dbReference type="SUPFAM" id="SSF46589">
    <property type="entry name" value="tRNA-binding arm"/>
    <property type="match status" value="1"/>
</dbReference>
<dbReference type="PROSITE" id="PS50862">
    <property type="entry name" value="AA_TRNA_LIGASE_II"/>
    <property type="match status" value="1"/>
</dbReference>
<proteinExistence type="inferred from homology"/>
<organism>
    <name type="scientific">Parasynechococcus marenigrum (strain WH8102)</name>
    <dbReference type="NCBI Taxonomy" id="84588"/>
    <lineage>
        <taxon>Bacteria</taxon>
        <taxon>Bacillati</taxon>
        <taxon>Cyanobacteriota</taxon>
        <taxon>Cyanophyceae</taxon>
        <taxon>Synechococcales</taxon>
        <taxon>Prochlorococcaceae</taxon>
        <taxon>Parasynechococcus</taxon>
        <taxon>Parasynechococcus marenigrum</taxon>
    </lineage>
</organism>
<comment type="function">
    <text evidence="1">Catalyzes the attachment of serine to tRNA(Ser). Is also able to aminoacylate tRNA(Sec) with serine, to form the misacylated tRNA L-seryl-tRNA(Sec), which will be further converted into selenocysteinyl-tRNA(Sec).</text>
</comment>
<comment type="catalytic activity">
    <reaction evidence="1">
        <text>tRNA(Ser) + L-serine + ATP = L-seryl-tRNA(Ser) + AMP + diphosphate + H(+)</text>
        <dbReference type="Rhea" id="RHEA:12292"/>
        <dbReference type="Rhea" id="RHEA-COMP:9669"/>
        <dbReference type="Rhea" id="RHEA-COMP:9703"/>
        <dbReference type="ChEBI" id="CHEBI:15378"/>
        <dbReference type="ChEBI" id="CHEBI:30616"/>
        <dbReference type="ChEBI" id="CHEBI:33019"/>
        <dbReference type="ChEBI" id="CHEBI:33384"/>
        <dbReference type="ChEBI" id="CHEBI:78442"/>
        <dbReference type="ChEBI" id="CHEBI:78533"/>
        <dbReference type="ChEBI" id="CHEBI:456215"/>
        <dbReference type="EC" id="6.1.1.11"/>
    </reaction>
</comment>
<comment type="catalytic activity">
    <reaction evidence="1">
        <text>tRNA(Sec) + L-serine + ATP = L-seryl-tRNA(Sec) + AMP + diphosphate + H(+)</text>
        <dbReference type="Rhea" id="RHEA:42580"/>
        <dbReference type="Rhea" id="RHEA-COMP:9742"/>
        <dbReference type="Rhea" id="RHEA-COMP:10128"/>
        <dbReference type="ChEBI" id="CHEBI:15378"/>
        <dbReference type="ChEBI" id="CHEBI:30616"/>
        <dbReference type="ChEBI" id="CHEBI:33019"/>
        <dbReference type="ChEBI" id="CHEBI:33384"/>
        <dbReference type="ChEBI" id="CHEBI:78442"/>
        <dbReference type="ChEBI" id="CHEBI:78533"/>
        <dbReference type="ChEBI" id="CHEBI:456215"/>
        <dbReference type="EC" id="6.1.1.11"/>
    </reaction>
</comment>
<comment type="pathway">
    <text evidence="1">Aminoacyl-tRNA biosynthesis; selenocysteinyl-tRNA(Sec) biosynthesis; L-seryl-tRNA(Sec) from L-serine and tRNA(Sec): step 1/1.</text>
</comment>
<comment type="subunit">
    <text evidence="1">Homodimer. The tRNA molecule binds across the dimer.</text>
</comment>
<comment type="subcellular location">
    <subcellularLocation>
        <location evidence="1">Cytoplasm</location>
    </subcellularLocation>
</comment>
<comment type="domain">
    <text evidence="1">Consists of two distinct domains, a catalytic core and a N-terminal extension that is involved in tRNA binding.</text>
</comment>
<comment type="similarity">
    <text evidence="1">Belongs to the class-II aminoacyl-tRNA synthetase family. Type-1 seryl-tRNA synthetase subfamily.</text>
</comment>
<gene>
    <name evidence="1" type="primary">serS</name>
    <name type="synonym">serRS</name>
    <name type="ordered locus">SYNW1894</name>
</gene>
<reference key="1">
    <citation type="journal article" date="2003" name="Nature">
        <title>The genome of a motile marine Synechococcus.</title>
        <authorList>
            <person name="Palenik B."/>
            <person name="Brahamsha B."/>
            <person name="Larimer F.W."/>
            <person name="Land M.L."/>
            <person name="Hauser L."/>
            <person name="Chain P."/>
            <person name="Lamerdin J.E."/>
            <person name="Regala W."/>
            <person name="Allen E.E."/>
            <person name="McCarren J."/>
            <person name="Paulsen I.T."/>
            <person name="Dufresne A."/>
            <person name="Partensky F."/>
            <person name="Webb E.A."/>
            <person name="Waterbury J."/>
        </authorList>
    </citation>
    <scope>NUCLEOTIDE SEQUENCE [LARGE SCALE GENOMIC DNA]</scope>
    <source>
        <strain>WH8102</strain>
    </source>
</reference>
<feature type="chain" id="PRO_0000122142" description="Serine--tRNA ligase">
    <location>
        <begin position="1"/>
        <end position="425"/>
    </location>
</feature>
<feature type="binding site" evidence="1">
    <location>
        <begin position="233"/>
        <end position="235"/>
    </location>
    <ligand>
        <name>L-serine</name>
        <dbReference type="ChEBI" id="CHEBI:33384"/>
    </ligand>
</feature>
<feature type="binding site" evidence="1">
    <location>
        <begin position="264"/>
        <end position="266"/>
    </location>
    <ligand>
        <name>ATP</name>
        <dbReference type="ChEBI" id="CHEBI:30616"/>
    </ligand>
</feature>
<feature type="binding site" evidence="1">
    <location>
        <position position="287"/>
    </location>
    <ligand>
        <name>L-serine</name>
        <dbReference type="ChEBI" id="CHEBI:33384"/>
    </ligand>
</feature>
<feature type="binding site" evidence="1">
    <location>
        <begin position="351"/>
        <end position="354"/>
    </location>
    <ligand>
        <name>ATP</name>
        <dbReference type="ChEBI" id="CHEBI:30616"/>
    </ligand>
</feature>
<feature type="binding site" evidence="1">
    <location>
        <position position="385"/>
    </location>
    <ligand>
        <name>L-serine</name>
        <dbReference type="ChEBI" id="CHEBI:33384"/>
    </ligand>
</feature>